<proteinExistence type="inferred from homology"/>
<dbReference type="EMBL" id="CP000472">
    <property type="protein sequence ID" value="ACJ27437.1"/>
    <property type="molecule type" value="Genomic_DNA"/>
</dbReference>
<dbReference type="RefSeq" id="WP_020910818.1">
    <property type="nucleotide sequence ID" value="NC_011566.1"/>
</dbReference>
<dbReference type="SMR" id="B8CIG1"/>
<dbReference type="STRING" id="225849.swp_0615"/>
<dbReference type="KEGG" id="swp:swp_0615"/>
<dbReference type="eggNOG" id="COG1342">
    <property type="taxonomic scope" value="Bacteria"/>
</dbReference>
<dbReference type="HOGENOM" id="CLU_094511_2_1_6"/>
<dbReference type="OrthoDB" id="280278at2"/>
<dbReference type="Proteomes" id="UP000000753">
    <property type="component" value="Chromosome"/>
</dbReference>
<dbReference type="HAMAP" id="MF_00674">
    <property type="entry name" value="UPF0251"/>
    <property type="match status" value="1"/>
</dbReference>
<dbReference type="InterPro" id="IPR002852">
    <property type="entry name" value="UPF0251"/>
</dbReference>
<dbReference type="PANTHER" id="PTHR37478">
    <property type="match status" value="1"/>
</dbReference>
<dbReference type="PANTHER" id="PTHR37478:SF2">
    <property type="entry name" value="UPF0251 PROTEIN TK0562"/>
    <property type="match status" value="1"/>
</dbReference>
<dbReference type="Pfam" id="PF02001">
    <property type="entry name" value="DUF134"/>
    <property type="match status" value="1"/>
</dbReference>
<reference key="1">
    <citation type="journal article" date="2008" name="PLoS ONE">
        <title>Environmental adaptation: genomic analysis of the piezotolerant and psychrotolerant deep-sea iron reducing bacterium Shewanella piezotolerans WP3.</title>
        <authorList>
            <person name="Wang F."/>
            <person name="Wang J."/>
            <person name="Jian H."/>
            <person name="Zhang B."/>
            <person name="Li S."/>
            <person name="Wang F."/>
            <person name="Zeng X."/>
            <person name="Gao L."/>
            <person name="Bartlett D.H."/>
            <person name="Yu J."/>
            <person name="Hu S."/>
            <person name="Xiao X."/>
        </authorList>
    </citation>
    <scope>NUCLEOTIDE SEQUENCE [LARGE SCALE GENOMIC DNA]</scope>
    <source>
        <strain>WP3 / JCM 13877</strain>
    </source>
</reference>
<accession>B8CIG1</accession>
<protein>
    <recommendedName>
        <fullName evidence="1">UPF0251 protein swp_0615</fullName>
    </recommendedName>
</protein>
<name>Y615_SHEPW</name>
<sequence length="100" mass="10955">MPRPKKCRNLSCRAPYSMLKPNGIPSVELEKIHIDADEFEALNLGDVQKMSQLDAAASMGISRQTFGYLLASARKKVATAITQGHGLVLPQSTDTKREVL</sequence>
<feature type="chain" id="PRO_1000131584" description="UPF0251 protein swp_0615">
    <location>
        <begin position="1"/>
        <end position="100"/>
    </location>
</feature>
<evidence type="ECO:0000255" key="1">
    <source>
        <dbReference type="HAMAP-Rule" id="MF_00674"/>
    </source>
</evidence>
<comment type="similarity">
    <text evidence="1">Belongs to the UPF0251 family.</text>
</comment>
<gene>
    <name type="ordered locus">swp_0615</name>
</gene>
<organism>
    <name type="scientific">Shewanella piezotolerans (strain WP3 / JCM 13877)</name>
    <dbReference type="NCBI Taxonomy" id="225849"/>
    <lineage>
        <taxon>Bacteria</taxon>
        <taxon>Pseudomonadati</taxon>
        <taxon>Pseudomonadota</taxon>
        <taxon>Gammaproteobacteria</taxon>
        <taxon>Alteromonadales</taxon>
        <taxon>Shewanellaceae</taxon>
        <taxon>Shewanella</taxon>
    </lineage>
</organism>